<sequence length="441" mass="49170">MDQEIRSNNYDISVSTVEDTSFEAMDDSILEIIDDEAPEIQGKPKANISTHFRNMLAMFGNFLSLGFFLVIIVLVGIAFEIGGRFCGLILTLALEVYFFSTALLKLFGLRKIALTLHFFEPLLVFILLIIALNASPSIEQNKYASFLASAWNTALLHFTPLFNLLEGMASLLVVQALGHLSRWLVHNKSENWMFFILLNASSAISMSLYLLYRVSSFSISNPNALMIGFSLATVIVISIYGVASGRANLSEASLMFLYIAYTVYMVCTDFGNPNTSSLEKPKFDYLPPNILQSVHYLISTISATLPRTLYNIVLFMVAAAKTVAPSVFATFAFRISVMYAVTRILPAIQNNIIFLEYSRTSKQGMWSILSPCILIAVYTNLLLQHLYPTPSFTSPVNQILCSAEIWRWVSAILTLLLYAIELAYSKESDTGQALASHFKLD</sequence>
<name>YDW1_SCHPO</name>
<proteinExistence type="predicted"/>
<organism>
    <name type="scientific">Schizosaccharomyces pombe (strain 972 / ATCC 24843)</name>
    <name type="common">Fission yeast</name>
    <dbReference type="NCBI Taxonomy" id="284812"/>
    <lineage>
        <taxon>Eukaryota</taxon>
        <taxon>Fungi</taxon>
        <taxon>Dikarya</taxon>
        <taxon>Ascomycota</taxon>
        <taxon>Taphrinomycotina</taxon>
        <taxon>Schizosaccharomycetes</taxon>
        <taxon>Schizosaccharomycetales</taxon>
        <taxon>Schizosaccharomycetaceae</taxon>
        <taxon>Schizosaccharomyces</taxon>
    </lineage>
</organism>
<reference key="1">
    <citation type="journal article" date="2002" name="Nature">
        <title>The genome sequence of Schizosaccharomyces pombe.</title>
        <authorList>
            <person name="Wood V."/>
            <person name="Gwilliam R."/>
            <person name="Rajandream M.A."/>
            <person name="Lyne M.H."/>
            <person name="Lyne R."/>
            <person name="Stewart A."/>
            <person name="Sgouros J.G."/>
            <person name="Peat N."/>
            <person name="Hayles J."/>
            <person name="Baker S.G."/>
            <person name="Basham D."/>
            <person name="Bowman S."/>
            <person name="Brooks K."/>
            <person name="Brown D."/>
            <person name="Brown S."/>
            <person name="Chillingworth T."/>
            <person name="Churcher C.M."/>
            <person name="Collins M."/>
            <person name="Connor R."/>
            <person name="Cronin A."/>
            <person name="Davis P."/>
            <person name="Feltwell T."/>
            <person name="Fraser A."/>
            <person name="Gentles S."/>
            <person name="Goble A."/>
            <person name="Hamlin N."/>
            <person name="Harris D.E."/>
            <person name="Hidalgo J."/>
            <person name="Hodgson G."/>
            <person name="Holroyd S."/>
            <person name="Hornsby T."/>
            <person name="Howarth S."/>
            <person name="Huckle E.J."/>
            <person name="Hunt S."/>
            <person name="Jagels K."/>
            <person name="James K.D."/>
            <person name="Jones L."/>
            <person name="Jones M."/>
            <person name="Leather S."/>
            <person name="McDonald S."/>
            <person name="McLean J."/>
            <person name="Mooney P."/>
            <person name="Moule S."/>
            <person name="Mungall K.L."/>
            <person name="Murphy L.D."/>
            <person name="Niblett D."/>
            <person name="Odell C."/>
            <person name="Oliver K."/>
            <person name="O'Neil S."/>
            <person name="Pearson D."/>
            <person name="Quail M.A."/>
            <person name="Rabbinowitsch E."/>
            <person name="Rutherford K.M."/>
            <person name="Rutter S."/>
            <person name="Saunders D."/>
            <person name="Seeger K."/>
            <person name="Sharp S."/>
            <person name="Skelton J."/>
            <person name="Simmonds M.N."/>
            <person name="Squares R."/>
            <person name="Squares S."/>
            <person name="Stevens K."/>
            <person name="Taylor K."/>
            <person name="Taylor R.G."/>
            <person name="Tivey A."/>
            <person name="Walsh S.V."/>
            <person name="Warren T."/>
            <person name="Whitehead S."/>
            <person name="Woodward J.R."/>
            <person name="Volckaert G."/>
            <person name="Aert R."/>
            <person name="Robben J."/>
            <person name="Grymonprez B."/>
            <person name="Weltjens I."/>
            <person name="Vanstreels E."/>
            <person name="Rieger M."/>
            <person name="Schaefer M."/>
            <person name="Mueller-Auer S."/>
            <person name="Gabel C."/>
            <person name="Fuchs M."/>
            <person name="Duesterhoeft A."/>
            <person name="Fritzc C."/>
            <person name="Holzer E."/>
            <person name="Moestl D."/>
            <person name="Hilbert H."/>
            <person name="Borzym K."/>
            <person name="Langer I."/>
            <person name="Beck A."/>
            <person name="Lehrach H."/>
            <person name="Reinhardt R."/>
            <person name="Pohl T.M."/>
            <person name="Eger P."/>
            <person name="Zimmermann W."/>
            <person name="Wedler H."/>
            <person name="Wambutt R."/>
            <person name="Purnelle B."/>
            <person name="Goffeau A."/>
            <person name="Cadieu E."/>
            <person name="Dreano S."/>
            <person name="Gloux S."/>
            <person name="Lelaure V."/>
            <person name="Mottier S."/>
            <person name="Galibert F."/>
            <person name="Aves S.J."/>
            <person name="Xiang Z."/>
            <person name="Hunt C."/>
            <person name="Moore K."/>
            <person name="Hurst S.M."/>
            <person name="Lucas M."/>
            <person name="Rochet M."/>
            <person name="Gaillardin C."/>
            <person name="Tallada V.A."/>
            <person name="Garzon A."/>
            <person name="Thode G."/>
            <person name="Daga R.R."/>
            <person name="Cruzado L."/>
            <person name="Jimenez J."/>
            <person name="Sanchez M."/>
            <person name="del Rey F."/>
            <person name="Benito J."/>
            <person name="Dominguez A."/>
            <person name="Revuelta J.L."/>
            <person name="Moreno S."/>
            <person name="Armstrong J."/>
            <person name="Forsburg S.L."/>
            <person name="Cerutti L."/>
            <person name="Lowe T."/>
            <person name="McCombie W.R."/>
            <person name="Paulsen I."/>
            <person name="Potashkin J."/>
            <person name="Shpakovski G.V."/>
            <person name="Ussery D."/>
            <person name="Barrell B.G."/>
            <person name="Nurse P."/>
        </authorList>
    </citation>
    <scope>NUCLEOTIDE SEQUENCE [LARGE SCALE GENOMIC DNA]</scope>
    <source>
        <strain>972 / ATCC 24843</strain>
    </source>
</reference>
<feature type="chain" id="PRO_0000116670" description="Uncharacterized protein C23C11.01">
    <location>
        <begin position="1"/>
        <end position="441"/>
    </location>
</feature>
<feature type="transmembrane region" description="Helical" evidence="1">
    <location>
        <begin position="62"/>
        <end position="82"/>
    </location>
</feature>
<feature type="transmembrane region" description="Helical" evidence="1">
    <location>
        <begin position="88"/>
        <end position="108"/>
    </location>
</feature>
<feature type="transmembrane region" description="Helical" evidence="1">
    <location>
        <begin position="112"/>
        <end position="132"/>
    </location>
</feature>
<feature type="transmembrane region" description="Helical" evidence="1">
    <location>
        <begin position="154"/>
        <end position="174"/>
    </location>
</feature>
<feature type="transmembrane region" description="Helical" evidence="1">
    <location>
        <begin position="192"/>
        <end position="212"/>
    </location>
</feature>
<feature type="transmembrane region" description="Helical" evidence="1">
    <location>
        <begin position="224"/>
        <end position="244"/>
    </location>
</feature>
<feature type="transmembrane region" description="Helical" evidence="1">
    <location>
        <begin position="247"/>
        <end position="267"/>
    </location>
</feature>
<feature type="transmembrane region" description="Helical" evidence="1">
    <location>
        <begin position="312"/>
        <end position="332"/>
    </location>
</feature>
<feature type="transmembrane region" description="Helical" evidence="1">
    <location>
        <begin position="335"/>
        <end position="355"/>
    </location>
</feature>
<feature type="transmembrane region" description="Helical" evidence="1">
    <location>
        <begin position="363"/>
        <end position="383"/>
    </location>
</feature>
<feature type="transmembrane region" description="Helical" evidence="1">
    <location>
        <begin position="399"/>
        <end position="419"/>
    </location>
</feature>
<protein>
    <recommendedName>
        <fullName>Uncharacterized protein C23C11.01</fullName>
    </recommendedName>
</protein>
<dbReference type="EMBL" id="CU329670">
    <property type="protein sequence ID" value="CAB11154.1"/>
    <property type="molecule type" value="Genomic_DNA"/>
</dbReference>
<dbReference type="PIR" id="T38239">
    <property type="entry name" value="T38239"/>
</dbReference>
<dbReference type="BioGRID" id="278507">
    <property type="interactions" value="7"/>
</dbReference>
<dbReference type="FunCoup" id="O13909">
    <property type="interactions" value="83"/>
</dbReference>
<dbReference type="STRING" id="284812.O13909"/>
<dbReference type="PaxDb" id="4896-SPAC23C11.01.1"/>
<dbReference type="EnsemblFungi" id="SPAC23C11.01.1">
    <property type="protein sequence ID" value="SPAC23C11.01.1:pep"/>
    <property type="gene ID" value="SPAC23C11.01"/>
</dbReference>
<dbReference type="KEGG" id="spo:2542025"/>
<dbReference type="PomBase" id="SPAC23C11.01"/>
<dbReference type="VEuPathDB" id="FungiDB:SPAC23C11.01"/>
<dbReference type="eggNOG" id="ENOG502QRTT">
    <property type="taxonomic scope" value="Eukaryota"/>
</dbReference>
<dbReference type="HOGENOM" id="CLU_027878_1_0_1"/>
<dbReference type="InParanoid" id="O13909"/>
<dbReference type="OMA" id="TTPDRSW"/>
<dbReference type="PhylomeDB" id="O13909"/>
<dbReference type="PRO" id="PR:O13909"/>
<dbReference type="Proteomes" id="UP000002485">
    <property type="component" value="Chromosome I"/>
</dbReference>
<dbReference type="GO" id="GO:0032541">
    <property type="term" value="C:cortical endoplasmic reticulum"/>
    <property type="evidence" value="ECO:0000318"/>
    <property type="project" value="GO_Central"/>
</dbReference>
<dbReference type="GO" id="GO:0005783">
    <property type="term" value="C:endoplasmic reticulum"/>
    <property type="evidence" value="ECO:0007005"/>
    <property type="project" value="PomBase"/>
</dbReference>
<dbReference type="GO" id="GO:0005789">
    <property type="term" value="C:endoplasmic reticulum membrane"/>
    <property type="evidence" value="ECO:0000318"/>
    <property type="project" value="GO_Central"/>
</dbReference>
<dbReference type="GO" id="GO:0097038">
    <property type="term" value="C:perinuclear endoplasmic reticulum"/>
    <property type="evidence" value="ECO:0000318"/>
    <property type="project" value="GO_Central"/>
</dbReference>
<dbReference type="GO" id="GO:0090158">
    <property type="term" value="P:endoplasmic reticulum membrane organization"/>
    <property type="evidence" value="ECO:0000266"/>
    <property type="project" value="PomBase"/>
</dbReference>
<dbReference type="GO" id="GO:0000921">
    <property type="term" value="P:septin ring assembly"/>
    <property type="evidence" value="ECO:0000318"/>
    <property type="project" value="GO_Central"/>
</dbReference>
<dbReference type="GO" id="GO:0006642">
    <property type="term" value="P:triglyceride mobilization"/>
    <property type="evidence" value="ECO:0000266"/>
    <property type="project" value="PomBase"/>
</dbReference>
<dbReference type="InterPro" id="IPR013635">
    <property type="entry name" value="Ice2"/>
</dbReference>
<dbReference type="PANTHER" id="PTHR31726">
    <property type="entry name" value="PROTEIN ICE2"/>
    <property type="match status" value="1"/>
</dbReference>
<dbReference type="PANTHER" id="PTHR31726:SF2">
    <property type="entry name" value="PROTEIN ICE2"/>
    <property type="match status" value="1"/>
</dbReference>
<dbReference type="Pfam" id="PF08426">
    <property type="entry name" value="ICE2"/>
    <property type="match status" value="1"/>
</dbReference>
<gene>
    <name type="ORF">SPAC23C11.01</name>
</gene>
<keyword id="KW-0472">Membrane</keyword>
<keyword id="KW-1185">Reference proteome</keyword>
<keyword id="KW-0812">Transmembrane</keyword>
<keyword id="KW-1133">Transmembrane helix</keyword>
<evidence type="ECO:0000255" key="1"/>
<evidence type="ECO:0000305" key="2"/>
<accession>O13909</accession>
<comment type="subcellular location">
    <subcellularLocation>
        <location evidence="2">Membrane</location>
        <topology evidence="2">Multi-pass membrane protein</topology>
    </subcellularLocation>
</comment>